<organism>
    <name type="scientific">Amphibalanus amphitrite</name>
    <name type="common">Striped barnacle</name>
    <name type="synonym">Balanus amphitrite</name>
    <dbReference type="NCBI Taxonomy" id="1232801"/>
    <lineage>
        <taxon>Eukaryota</taxon>
        <taxon>Metazoa</taxon>
        <taxon>Ecdysozoa</taxon>
        <taxon>Arthropoda</taxon>
        <taxon>Crustacea</taxon>
        <taxon>Multicrustacea</taxon>
        <taxon>Cirripedia</taxon>
        <taxon>Thoracica</taxon>
        <taxon>Thoracicalcarea</taxon>
        <taxon>Balanomorpha</taxon>
        <taxon>Balanoidea</taxon>
        <taxon>Balanidae</taxon>
        <taxon>Amphibalaninae</taxon>
        <taxon>Amphibalanus</taxon>
    </lineage>
</organism>
<accession>Q93127</accession>
<evidence type="ECO:0000250" key="1"/>
<evidence type="ECO:0000255" key="2"/>
<evidence type="ECO:0000255" key="3">
    <source>
        <dbReference type="PROSITE-ProRule" id="PRU00521"/>
    </source>
</evidence>
<evidence type="ECO:0000256" key="4">
    <source>
        <dbReference type="SAM" id="MobiDB-lite"/>
    </source>
</evidence>
<name>GPR18_AMPAM</name>
<keyword id="KW-1003">Cell membrane</keyword>
<keyword id="KW-1015">Disulfide bond</keyword>
<keyword id="KW-0297">G-protein coupled receptor</keyword>
<keyword id="KW-0325">Glycoprotein</keyword>
<keyword id="KW-0472">Membrane</keyword>
<keyword id="KW-0675">Receptor</keyword>
<keyword id="KW-0807">Transducer</keyword>
<keyword id="KW-0812">Transmembrane</keyword>
<keyword id="KW-1133">Transmembrane helix</keyword>
<comment type="function">
    <text>Probable G-protein coupled receptor for an amine.</text>
</comment>
<comment type="subcellular location">
    <subcellularLocation>
        <location evidence="1">Cell membrane</location>
        <topology evidence="1">Multi-pass membrane protein</topology>
    </subcellularLocation>
</comment>
<comment type="similarity">
    <text evidence="3">Belongs to the G-protein coupled receptor 1 family.</text>
</comment>
<protein>
    <recommendedName>
        <fullName>Probable G-protein coupled receptor No18</fullName>
    </recommendedName>
</protein>
<proteinExistence type="inferred from homology"/>
<feature type="chain" id="PRO_0000069660" description="Probable G-protein coupled receptor No18">
    <location>
        <begin position="1"/>
        <end position="379"/>
    </location>
</feature>
<feature type="topological domain" description="Extracellular" evidence="2">
    <location>
        <begin position="5"/>
        <end position="36"/>
    </location>
</feature>
<feature type="transmembrane region" description="Helical; Name=1" evidence="2">
    <location>
        <begin position="37"/>
        <end position="58"/>
    </location>
</feature>
<feature type="topological domain" description="Cytoplasmic" evidence="2">
    <location>
        <begin position="59"/>
        <end position="68"/>
    </location>
</feature>
<feature type="transmembrane region" description="Helical; Name=2" evidence="2">
    <location>
        <begin position="69"/>
        <end position="90"/>
    </location>
</feature>
<feature type="topological domain" description="Extracellular" evidence="2">
    <location>
        <begin position="91"/>
        <end position="107"/>
    </location>
</feature>
<feature type="transmembrane region" description="Helical; Name=3" evidence="2">
    <location>
        <begin position="108"/>
        <end position="128"/>
    </location>
</feature>
<feature type="topological domain" description="Cytoplasmic" evidence="2">
    <location>
        <begin position="129"/>
        <end position="148"/>
    </location>
</feature>
<feature type="transmembrane region" description="Helical; Name=4" evidence="2">
    <location>
        <begin position="149"/>
        <end position="171"/>
    </location>
</feature>
<feature type="topological domain" description="Extracellular" evidence="2">
    <location>
        <begin position="172"/>
        <end position="196"/>
    </location>
</feature>
<feature type="transmembrane region" description="Helical; Name=5" evidence="2">
    <location>
        <begin position="197"/>
        <end position="218"/>
    </location>
</feature>
<feature type="topological domain" description="Cytoplasmic" evidence="2">
    <location>
        <begin position="219"/>
        <end position="303"/>
    </location>
</feature>
<feature type="transmembrane region" description="Helical; Name=6" evidence="2">
    <location>
        <begin position="304"/>
        <end position="325"/>
    </location>
</feature>
<feature type="topological domain" description="Extracellular" evidence="2">
    <location>
        <begin position="326"/>
        <end position="340"/>
    </location>
</feature>
<feature type="transmembrane region" description="Helical; Name=7" evidence="2">
    <location>
        <begin position="341"/>
        <end position="362"/>
    </location>
</feature>
<feature type="topological domain" description="Cytoplasmic" evidence="2">
    <location>
        <begin position="363"/>
        <end position="375"/>
    </location>
</feature>
<feature type="region of interest" description="Disordered" evidence="4">
    <location>
        <begin position="234"/>
        <end position="276"/>
    </location>
</feature>
<feature type="glycosylation site" description="N-linked (GlcNAc...) asparagine" evidence="2">
    <location>
        <position position="17"/>
    </location>
</feature>
<feature type="disulfide bond" evidence="3">
    <location>
        <begin position="105"/>
        <end position="184"/>
    </location>
</feature>
<sequence>MSGGEASITGRTAPELNASAAPLDDERELGETVAATALLLAIILVTIVGNSLVIISVFTYRPLRSVQNFFVVSLAVADLTVALFVLPLNVAYRLLNQWLLGSYLCQMWLTCDILCCTSSILNLCVIALDRYWAITDPINYAQKRTIRRVNTMIAAVWALSLVISVPPLLGWNDWPAQFTEDTPCTLTQERLFVVYSSSGSFFIPLIIMSVVYAKIFFATKRRLRERTRKLGTLAVPAPPQRTSSRPLAELESVASQEDETEPSPEPEPLSSRADKPANGISVHQFIEEKQRISLSKERKAARVLGVIMGVFVVCWLPFFLMYAIVPFCTNCAPPSQRVVDFVTWLGYVNSSLNPIIYTIYNKDFRTAFSRLLRCDRRMS</sequence>
<dbReference type="EMBL" id="D83547">
    <property type="protein sequence ID" value="BAA12013.1"/>
    <property type="molecule type" value="Genomic_DNA"/>
</dbReference>
<dbReference type="PIR" id="JC6178">
    <property type="entry name" value="JC6178"/>
</dbReference>
<dbReference type="RefSeq" id="XP_043188393.1">
    <property type="nucleotide sequence ID" value="XM_043332458.1"/>
</dbReference>
<dbReference type="RefSeq" id="XP_043222746.1">
    <property type="nucleotide sequence ID" value="XM_043366811.1"/>
</dbReference>
<dbReference type="SMR" id="Q93127"/>
<dbReference type="EnsemblMetazoa" id="XM_043332458.1">
    <property type="protein sequence ID" value="XP_043188393.1"/>
    <property type="gene ID" value="LOC122363329"/>
</dbReference>
<dbReference type="EnsemblMetazoa" id="XM_043366811.1">
    <property type="protein sequence ID" value="XP_043222746.1"/>
    <property type="gene ID" value="LOC122381987"/>
</dbReference>
<dbReference type="GeneID" id="122363329"/>
<dbReference type="GeneID" id="122381987"/>
<dbReference type="OrthoDB" id="5955450at2759"/>
<dbReference type="GO" id="GO:0005886">
    <property type="term" value="C:plasma membrane"/>
    <property type="evidence" value="ECO:0007669"/>
    <property type="project" value="UniProtKB-SubCell"/>
</dbReference>
<dbReference type="GO" id="GO:0004989">
    <property type="term" value="F:octopamine receptor activity"/>
    <property type="evidence" value="ECO:0007669"/>
    <property type="project" value="InterPro"/>
</dbReference>
<dbReference type="CDD" id="cd15060">
    <property type="entry name" value="7tmA_tyramine_octopamine_R-like"/>
    <property type="match status" value="1"/>
</dbReference>
<dbReference type="Gene3D" id="1.20.1070.10">
    <property type="entry name" value="Rhodopsin 7-helix transmembrane proteins"/>
    <property type="match status" value="1"/>
</dbReference>
<dbReference type="InterPro" id="IPR000276">
    <property type="entry name" value="GPCR_Rhodpsn"/>
</dbReference>
<dbReference type="InterPro" id="IPR017452">
    <property type="entry name" value="GPCR_Rhodpsn_7TM"/>
</dbReference>
<dbReference type="InterPro" id="IPR002002">
    <property type="entry name" value="Octopmn_rcpt"/>
</dbReference>
<dbReference type="PANTHER" id="PTHR24248">
    <property type="entry name" value="ADRENERGIC RECEPTOR-RELATED G-PROTEIN COUPLED RECEPTOR"/>
    <property type="match status" value="1"/>
</dbReference>
<dbReference type="PANTHER" id="PTHR24248:SF174">
    <property type="entry name" value="TYRAMINE_OCTOPAMINE RECEPTOR"/>
    <property type="match status" value="1"/>
</dbReference>
<dbReference type="Pfam" id="PF00001">
    <property type="entry name" value="7tm_1"/>
    <property type="match status" value="1"/>
</dbReference>
<dbReference type="PRINTS" id="PR00237">
    <property type="entry name" value="GPCRRHODOPSN"/>
</dbReference>
<dbReference type="PRINTS" id="PR00664">
    <property type="entry name" value="OCTOPAMINER"/>
</dbReference>
<dbReference type="SMART" id="SM01381">
    <property type="entry name" value="7TM_GPCR_Srsx"/>
    <property type="match status" value="1"/>
</dbReference>
<dbReference type="SUPFAM" id="SSF81321">
    <property type="entry name" value="Family A G protein-coupled receptor-like"/>
    <property type="match status" value="1"/>
</dbReference>
<dbReference type="PROSITE" id="PS00237">
    <property type="entry name" value="G_PROTEIN_RECEP_F1_1"/>
    <property type="match status" value="1"/>
</dbReference>
<dbReference type="PROSITE" id="PS50262">
    <property type="entry name" value="G_PROTEIN_RECEP_F1_2"/>
    <property type="match status" value="1"/>
</dbReference>
<reference key="1">
    <citation type="journal article" date="1997" name="Gene">
        <title>Molecular cloning of a putative serotonin receptor gene from barnacle, Balanus amphitrite.</title>
        <authorList>
            <person name="Kawahara H."/>
            <person name="Isoai A."/>
            <person name="Shizuri Y."/>
        </authorList>
    </citation>
    <scope>NUCLEOTIDE SEQUENCE [GENOMIC DNA]</scope>
    <source>
        <strain>Darwin</strain>
    </source>
</reference>